<keyword id="KW-0025">Alternative splicing</keyword>
<keyword id="KW-1003">Cell membrane</keyword>
<keyword id="KW-1015">Disulfide bond</keyword>
<keyword id="KW-0325">Glycoprotein</keyword>
<keyword id="KW-0336">GPI-anchor</keyword>
<keyword id="KW-0378">Hydrolase</keyword>
<keyword id="KW-0442">Lipid degradation</keyword>
<keyword id="KW-0443">Lipid metabolism</keyword>
<keyword id="KW-0449">Lipoprotein</keyword>
<keyword id="KW-0472">Membrane</keyword>
<keyword id="KW-0479">Metal-binding</keyword>
<keyword id="KW-0597">Phosphoprotein</keyword>
<keyword id="KW-1185">Reference proteome</keyword>
<keyword id="KW-0732">Signal</keyword>
<keyword id="KW-0862">Zinc</keyword>
<dbReference type="EC" id="3.1.4.-" evidence="4"/>
<dbReference type="EC" id="3.1.4.38" evidence="4"/>
<dbReference type="EMBL" id="CR858810">
    <property type="protein sequence ID" value="CAH91015.1"/>
    <property type="molecule type" value="mRNA"/>
</dbReference>
<dbReference type="RefSeq" id="NP_001127363.1">
    <property type="nucleotide sequence ID" value="NM_001133891.1"/>
</dbReference>
<dbReference type="SMR" id="Q5RB45"/>
<dbReference type="FunCoup" id="Q5RB45">
    <property type="interactions" value="88"/>
</dbReference>
<dbReference type="STRING" id="9601.ENSPPYP00000017018"/>
<dbReference type="GlyCosmos" id="Q5RB45">
    <property type="glycosylation" value="4 sites, No reported glycans"/>
</dbReference>
<dbReference type="GeneID" id="100174428"/>
<dbReference type="KEGG" id="pon:100174428"/>
<dbReference type="CTD" id="133121"/>
<dbReference type="eggNOG" id="KOG2645">
    <property type="taxonomic scope" value="Eukaryota"/>
</dbReference>
<dbReference type="HOGENOM" id="CLU_017594_2_0_1"/>
<dbReference type="InParanoid" id="Q5RB45"/>
<dbReference type="OrthoDB" id="415411at2759"/>
<dbReference type="TreeFam" id="TF330032"/>
<dbReference type="Proteomes" id="UP000001595">
    <property type="component" value="Chromosome 4"/>
</dbReference>
<dbReference type="GO" id="GO:0005886">
    <property type="term" value="C:plasma membrane"/>
    <property type="evidence" value="ECO:0000250"/>
    <property type="project" value="UniProtKB"/>
</dbReference>
<dbReference type="GO" id="GO:0098552">
    <property type="term" value="C:side of membrane"/>
    <property type="evidence" value="ECO:0007669"/>
    <property type="project" value="UniProtKB-KW"/>
</dbReference>
<dbReference type="GO" id="GO:0047390">
    <property type="term" value="F:glycerophosphocholine cholinephosphodiesterase activity"/>
    <property type="evidence" value="ECO:0000250"/>
    <property type="project" value="UniProtKB"/>
</dbReference>
<dbReference type="GO" id="GO:0008889">
    <property type="term" value="F:glycerophosphodiester phosphodiesterase activity"/>
    <property type="evidence" value="ECO:0007669"/>
    <property type="project" value="TreeGrafter"/>
</dbReference>
<dbReference type="GO" id="GO:0046872">
    <property type="term" value="F:metal ion binding"/>
    <property type="evidence" value="ECO:0007669"/>
    <property type="project" value="UniProtKB-KW"/>
</dbReference>
<dbReference type="GO" id="GO:0008081">
    <property type="term" value="F:phosphoric diester hydrolase activity"/>
    <property type="evidence" value="ECO:0000250"/>
    <property type="project" value="UniProtKB"/>
</dbReference>
<dbReference type="GO" id="GO:0019695">
    <property type="term" value="P:choline metabolic process"/>
    <property type="evidence" value="ECO:0000250"/>
    <property type="project" value="UniProtKB"/>
</dbReference>
<dbReference type="GO" id="GO:0016042">
    <property type="term" value="P:lipid catabolic process"/>
    <property type="evidence" value="ECO:0007669"/>
    <property type="project" value="UniProtKB-KW"/>
</dbReference>
<dbReference type="GO" id="GO:0006629">
    <property type="term" value="P:lipid metabolic process"/>
    <property type="evidence" value="ECO:0000250"/>
    <property type="project" value="UniProtKB"/>
</dbReference>
<dbReference type="CDD" id="cd16018">
    <property type="entry name" value="Enpp"/>
    <property type="match status" value="1"/>
</dbReference>
<dbReference type="FunFam" id="3.30.1360.180:FF:000001">
    <property type="entry name" value="Ectonucleotide pyrophosphatase/phosphodiesterase family member 6"/>
    <property type="match status" value="1"/>
</dbReference>
<dbReference type="FunFam" id="3.40.720.10:FF:000029">
    <property type="entry name" value="ectonucleotide pyrophosphatase/phosphodiesterase family member 6"/>
    <property type="match status" value="1"/>
</dbReference>
<dbReference type="Gene3D" id="3.30.1360.180">
    <property type="match status" value="1"/>
</dbReference>
<dbReference type="Gene3D" id="3.40.720.10">
    <property type="entry name" value="Alkaline Phosphatase, subunit A"/>
    <property type="match status" value="1"/>
</dbReference>
<dbReference type="InterPro" id="IPR017850">
    <property type="entry name" value="Alkaline_phosphatase_core_sf"/>
</dbReference>
<dbReference type="InterPro" id="IPR002591">
    <property type="entry name" value="Phosphodiest/P_Trfase"/>
</dbReference>
<dbReference type="PANTHER" id="PTHR10151">
    <property type="entry name" value="ECTONUCLEOTIDE PYROPHOSPHATASE/PHOSPHODIESTERASE"/>
    <property type="match status" value="1"/>
</dbReference>
<dbReference type="PANTHER" id="PTHR10151:SF66">
    <property type="entry name" value="GLYCEROPHOSPHOCHOLINE CHOLINEPHOSPHODIESTERASE ENPP6"/>
    <property type="match status" value="1"/>
</dbReference>
<dbReference type="Pfam" id="PF01663">
    <property type="entry name" value="Phosphodiest"/>
    <property type="match status" value="1"/>
</dbReference>
<dbReference type="SUPFAM" id="SSF53649">
    <property type="entry name" value="Alkaline phosphatase-like"/>
    <property type="match status" value="1"/>
</dbReference>
<protein>
    <recommendedName>
        <fullName evidence="3">Glycerophosphocholine cholinephosphodiesterase ENPP6</fullName>
        <shortName>GPC-Cpde</shortName>
        <ecNumber evidence="4">3.1.4.-</ecNumber>
        <ecNumber evidence="4">3.1.4.38</ecNumber>
    </recommendedName>
    <alternativeName>
        <fullName evidence="4">Choline-specific glycerophosphodiester phosphodiesterase</fullName>
    </alternativeName>
    <alternativeName>
        <fullName>Ectonucleotide pyrophosphatase/phosphodiesterase family member 6</fullName>
        <shortName>E-NPP 6</shortName>
        <shortName>NPP-6</shortName>
    </alternativeName>
</protein>
<organism>
    <name type="scientific">Pongo abelii</name>
    <name type="common">Sumatran orangutan</name>
    <name type="synonym">Pongo pygmaeus abelii</name>
    <dbReference type="NCBI Taxonomy" id="9601"/>
    <lineage>
        <taxon>Eukaryota</taxon>
        <taxon>Metazoa</taxon>
        <taxon>Chordata</taxon>
        <taxon>Craniata</taxon>
        <taxon>Vertebrata</taxon>
        <taxon>Euteleostomi</taxon>
        <taxon>Mammalia</taxon>
        <taxon>Eutheria</taxon>
        <taxon>Euarchontoglires</taxon>
        <taxon>Primates</taxon>
        <taxon>Haplorrhini</taxon>
        <taxon>Catarrhini</taxon>
        <taxon>Hominidae</taxon>
        <taxon>Pongo</taxon>
    </lineage>
</organism>
<name>ENPP6_PONAB</name>
<reference key="1">
    <citation type="submission" date="2004-11" db="EMBL/GenBank/DDBJ databases">
        <authorList>
            <consortium name="The German cDNA consortium"/>
        </authorList>
    </citation>
    <scope>NUCLEOTIDE SEQUENCE [LARGE SCALE MRNA] (ISOFORM 2)</scope>
    <source>
        <tissue>Kidney</tissue>
    </source>
</reference>
<reference key="2">
    <citation type="submission" date="2008-02" db="EMBL/GenBank/DDBJ databases">
        <title>A 6x draft sequence assembly of the Pongo pygmaeus abelii genome.</title>
        <authorList>
            <person name="Wilson R.K."/>
            <person name="Mardis E."/>
        </authorList>
    </citation>
    <scope>NUCLEOTIDE SEQUENCE [LARGE SCALE GENOMIC DNA]</scope>
</reference>
<accession>Q5RB45</accession>
<accession>H2PEU7</accession>
<sequence>MAVKLGTLLLALALGLAQPASARRKLLVFLLDGFRSDYISDEALESLPGFKEIVSRGVKVDYLTPDFPSLSYPNYYTLMTGRHCEVHQMIGNYMWDPTTNKSFDIGVNKDSLMPLWWNGSEPLWVTLTKAKRKVYMYYWPGCEVEILGVRPTYCLEYKNVPTDINFANAVSDALDSFKSGRADLAAIYHERIDVEGHHYGPASPQRKDALKAVDTVLKYMTKWIQERGLQDRLNVIIFSDHGMTDIFWMDKVIELNKYISLNDLQQAKDRGPVVSLWPAPGKHSEIYNKLSTVEHMTVYEKEAIPSRFYYKKGKFVSPLTLVADEGWFITENREMLPFWMNSTGRGNGWQRGWHGYDNELMDMRGIFLAFGPDFKSNFRAAPIRSVDVYNVMCNVVGITPLPNNGSWSRVMCMLKGRAGTTPPVQPSHCALALILLFLLA</sequence>
<comment type="function">
    <text evidence="4">Choline-specific glycerophosphodiesterase that hydrolyzes glycerophosphocholine (GPC) and lysophosphatidylcholine (LPC) and contributes to supplying choline to the cells. Has a preference for LPC with short (12:0 and 14:0) or polyunsaturated (18:2 and 20:4) fatty acids. In vitro, hydrolyzes only choline-containing lysophospholipids, such as sphingosylphosphorylcholine (SPC), platelet-activating factor (PAF) and lysoPAF, but not other lysophospholipids.</text>
</comment>
<comment type="catalytic activity">
    <reaction evidence="4">
        <text>sn-glycerol 3-phosphocholine + H2O = phosphocholine + glycerol + H(+)</text>
        <dbReference type="Rhea" id="RHEA:19545"/>
        <dbReference type="ChEBI" id="CHEBI:15377"/>
        <dbReference type="ChEBI" id="CHEBI:15378"/>
        <dbReference type="ChEBI" id="CHEBI:16870"/>
        <dbReference type="ChEBI" id="CHEBI:17754"/>
        <dbReference type="ChEBI" id="CHEBI:295975"/>
        <dbReference type="EC" id="3.1.4.38"/>
    </reaction>
    <physiologicalReaction direction="left-to-right" evidence="4">
        <dbReference type="Rhea" id="RHEA:19546"/>
    </physiologicalReaction>
</comment>
<comment type="catalytic activity">
    <reaction evidence="4">
        <text>a 1-acyl-sn-glycero-3-phosphocholine + H2O = a 1-acyl-sn-glycerol + phosphocholine + H(+)</text>
        <dbReference type="Rhea" id="RHEA:44720"/>
        <dbReference type="ChEBI" id="CHEBI:15377"/>
        <dbReference type="ChEBI" id="CHEBI:15378"/>
        <dbReference type="ChEBI" id="CHEBI:58168"/>
        <dbReference type="ChEBI" id="CHEBI:64683"/>
        <dbReference type="ChEBI" id="CHEBI:295975"/>
    </reaction>
    <physiologicalReaction direction="left-to-right" evidence="4">
        <dbReference type="Rhea" id="RHEA:44721"/>
    </physiologicalReaction>
</comment>
<comment type="catalytic activity">
    <reaction evidence="4">
        <text>a 1-O-alkyl-sn-glycero-3-phosphocholine + H2O = a 1-O-alkyl-sn-glycerol + phosphocholine + H(+)</text>
        <dbReference type="Rhea" id="RHEA:36083"/>
        <dbReference type="ChEBI" id="CHEBI:15377"/>
        <dbReference type="ChEBI" id="CHEBI:15378"/>
        <dbReference type="ChEBI" id="CHEBI:15850"/>
        <dbReference type="ChEBI" id="CHEBI:30909"/>
        <dbReference type="ChEBI" id="CHEBI:295975"/>
    </reaction>
    <physiologicalReaction direction="left-to-right" evidence="4">
        <dbReference type="Rhea" id="RHEA:36084"/>
    </physiologicalReaction>
</comment>
<comment type="catalytic activity">
    <reaction evidence="4">
        <text>1-dodecanoyl-sn-glycero-3-phosphocholine + H2O = 1-dodecanoyl-sn-glycerol + phosphocholine + H(+)</text>
        <dbReference type="Rhea" id="RHEA:41127"/>
        <dbReference type="ChEBI" id="CHEBI:15377"/>
        <dbReference type="ChEBI" id="CHEBI:15378"/>
        <dbReference type="ChEBI" id="CHEBI:74966"/>
        <dbReference type="ChEBI" id="CHEBI:75529"/>
        <dbReference type="ChEBI" id="CHEBI:295975"/>
    </reaction>
    <physiologicalReaction direction="left-to-right" evidence="4">
        <dbReference type="Rhea" id="RHEA:41128"/>
    </physiologicalReaction>
</comment>
<comment type="catalytic activity">
    <reaction evidence="4">
        <text>1-hexadecanoyl-sn-glycero-3-phosphocholine + H2O = 1-hexadecanoyl-sn-glycerol + phosphocholine + H(+)</text>
        <dbReference type="Rhea" id="RHEA:41119"/>
        <dbReference type="ChEBI" id="CHEBI:15377"/>
        <dbReference type="ChEBI" id="CHEBI:15378"/>
        <dbReference type="ChEBI" id="CHEBI:72998"/>
        <dbReference type="ChEBI" id="CHEBI:75542"/>
        <dbReference type="ChEBI" id="CHEBI:295975"/>
    </reaction>
    <physiologicalReaction direction="left-to-right" evidence="4">
        <dbReference type="Rhea" id="RHEA:41120"/>
    </physiologicalReaction>
</comment>
<comment type="catalytic activity">
    <reaction evidence="4">
        <text>1-(5Z,8Z,11Z,14Z-eicosatetraenoyl)-sn-glycero-3-phosphocholine + H2O = 1-(5Z,8Z,11Z,14Z-eicosatetraenoyl)-sn-glycerol + phosphocholine + H(+)</text>
        <dbReference type="Rhea" id="RHEA:41003"/>
        <dbReference type="ChEBI" id="CHEBI:15377"/>
        <dbReference type="ChEBI" id="CHEBI:15378"/>
        <dbReference type="ChEBI" id="CHEBI:34071"/>
        <dbReference type="ChEBI" id="CHEBI:74344"/>
        <dbReference type="ChEBI" id="CHEBI:295975"/>
    </reaction>
    <physiologicalReaction direction="left-to-right" evidence="4">
        <dbReference type="Rhea" id="RHEA:41004"/>
    </physiologicalReaction>
</comment>
<comment type="catalytic activity">
    <reaction evidence="4">
        <text>1-tetradecanoyl-sn-glycero-3-phosphocholine + H2O = 1-tetradecanoyl-sn-glycerol + phosphocholine + H(+)</text>
        <dbReference type="Rhea" id="RHEA:40999"/>
        <dbReference type="ChEBI" id="CHEBI:15377"/>
        <dbReference type="ChEBI" id="CHEBI:15378"/>
        <dbReference type="ChEBI" id="CHEBI:64489"/>
        <dbReference type="ChEBI" id="CHEBI:75536"/>
        <dbReference type="ChEBI" id="CHEBI:295975"/>
    </reaction>
    <physiologicalReaction direction="left-to-right" evidence="4">
        <dbReference type="Rhea" id="RHEA:41000"/>
    </physiologicalReaction>
</comment>
<comment type="catalytic activity">
    <reaction evidence="4">
        <text>sphing-4-enine-phosphocholine + H2O = sphing-4-enine + phosphocholine + H(+)</text>
        <dbReference type="Rhea" id="RHEA:41095"/>
        <dbReference type="ChEBI" id="CHEBI:15377"/>
        <dbReference type="ChEBI" id="CHEBI:15378"/>
        <dbReference type="ChEBI" id="CHEBI:57756"/>
        <dbReference type="ChEBI" id="CHEBI:58906"/>
        <dbReference type="ChEBI" id="CHEBI:295975"/>
    </reaction>
    <physiologicalReaction direction="left-to-right" evidence="4">
        <dbReference type="Rhea" id="RHEA:41096"/>
    </physiologicalReaction>
</comment>
<comment type="catalytic activity">
    <reaction evidence="4">
        <text>1-(9Z-octadecenoyl)-sn-glycero-3-phosphocholine + H2O = 1-(9Z-octadecenoyl)-sn-glycerol + phosphocholine + H(+)</text>
        <dbReference type="Rhea" id="RHEA:41091"/>
        <dbReference type="ChEBI" id="CHEBI:15377"/>
        <dbReference type="ChEBI" id="CHEBI:15378"/>
        <dbReference type="ChEBI" id="CHEBI:28610"/>
        <dbReference type="ChEBI" id="CHEBI:75757"/>
        <dbReference type="ChEBI" id="CHEBI:295975"/>
    </reaction>
    <physiologicalReaction direction="left-to-right" evidence="4">
        <dbReference type="Rhea" id="RHEA:41092"/>
    </physiologicalReaction>
</comment>
<comment type="catalytic activity">
    <reaction evidence="4">
        <text>1-(9Z,12Z)-octadecadienoyl-sn-glycero-3-phosphocholine + H2O = 1-(9Z,12Z-octadecadienoyl)-sn-glycerol + phosphocholine + H(+)</text>
        <dbReference type="Rhea" id="RHEA:41115"/>
        <dbReference type="ChEBI" id="CHEBI:15377"/>
        <dbReference type="ChEBI" id="CHEBI:15378"/>
        <dbReference type="ChEBI" id="CHEBI:28733"/>
        <dbReference type="ChEBI" id="CHEBI:75561"/>
        <dbReference type="ChEBI" id="CHEBI:295975"/>
    </reaction>
    <physiologicalReaction direction="left-to-right" evidence="4">
        <dbReference type="Rhea" id="RHEA:41116"/>
    </physiologicalReaction>
</comment>
<comment type="catalytic activity">
    <reaction evidence="4">
        <text>glycero-2-phosphocholine + H2O = phosphocholine + glycerol + H(+)</text>
        <dbReference type="Rhea" id="RHEA:61684"/>
        <dbReference type="ChEBI" id="CHEBI:15377"/>
        <dbReference type="ChEBI" id="CHEBI:15378"/>
        <dbReference type="ChEBI" id="CHEBI:17754"/>
        <dbReference type="ChEBI" id="CHEBI:144950"/>
        <dbReference type="ChEBI" id="CHEBI:295975"/>
    </reaction>
    <physiologicalReaction direction="left-to-right" evidence="4">
        <dbReference type="Rhea" id="RHEA:61685"/>
    </physiologicalReaction>
</comment>
<comment type="cofactor">
    <cofactor evidence="4">
        <name>Zn(2+)</name>
        <dbReference type="ChEBI" id="CHEBI:29105"/>
    </cofactor>
    <text evidence="4">Binds 2 Zn(2+) ions per subunit.</text>
</comment>
<comment type="activity regulation">
    <text evidence="1">Inhibited by EDTA and EGTA in vitro.</text>
</comment>
<comment type="subunit">
    <text evidence="1 4">Homodimer; disulfide-linked. Homotetramer.</text>
</comment>
<comment type="subcellular location">
    <subcellularLocation>
        <location evidence="1">Cell membrane</location>
        <topology evidence="1">Lipid-anchor</topology>
        <topology evidence="1">GPI-anchor</topology>
    </subcellularLocation>
</comment>
<comment type="alternative products">
    <event type="alternative splicing"/>
    <isoform>
        <id>Q5RB45-1</id>
        <name>1</name>
        <sequence type="displayed"/>
    </isoform>
    <isoform>
        <id>Q5RB45-2</id>
        <name>2</name>
        <sequence type="described" ref="VSP_044950"/>
    </isoform>
</comment>
<comment type="similarity">
    <text evidence="7">Belongs to the nucleotide pyrophosphatase/phosphodiesterase family.</text>
</comment>
<evidence type="ECO:0000250" key="1"/>
<evidence type="ECO:0000250" key="2">
    <source>
        <dbReference type="UniProtKB" id="B0BND0"/>
    </source>
</evidence>
<evidence type="ECO:0000250" key="3">
    <source>
        <dbReference type="UniProtKB" id="Q6UWR7"/>
    </source>
</evidence>
<evidence type="ECO:0000250" key="4">
    <source>
        <dbReference type="UniProtKB" id="Q8BGN3"/>
    </source>
</evidence>
<evidence type="ECO:0000255" key="5"/>
<evidence type="ECO:0000303" key="6">
    <source ref="1"/>
</evidence>
<evidence type="ECO:0000305" key="7"/>
<feature type="signal peptide" evidence="1">
    <location>
        <begin position="1"/>
        <end position="22"/>
    </location>
</feature>
<feature type="chain" id="PRO_0000366923" description="Glycerophosphocholine cholinephosphodiesterase ENPP6">
    <location>
        <begin position="23"/>
        <end position="418"/>
    </location>
</feature>
<feature type="propeptide" id="PRO_0000420893" description="Removed in mature form" evidence="5">
    <location>
        <begin position="419"/>
        <end position="440"/>
    </location>
</feature>
<feature type="active site" description="Nucleophile" evidence="5">
    <location>
        <position position="71"/>
    </location>
</feature>
<feature type="binding site" evidence="4">
    <location>
        <position position="32"/>
    </location>
    <ligand>
        <name>substrate</name>
    </ligand>
</feature>
<feature type="binding site" evidence="4">
    <location>
        <position position="32"/>
    </location>
    <ligand>
        <name>Zn(2+)</name>
        <dbReference type="ChEBI" id="CHEBI:29105"/>
        <label>1</label>
        <note>catalytic</note>
    </ligand>
</feature>
<feature type="binding site" evidence="4">
    <location>
        <position position="71"/>
    </location>
    <ligand>
        <name>substrate</name>
    </ligand>
</feature>
<feature type="binding site" evidence="4">
    <location>
        <position position="71"/>
    </location>
    <ligand>
        <name>Zn(2+)</name>
        <dbReference type="ChEBI" id="CHEBI:29105"/>
        <label>1</label>
        <note>catalytic</note>
    </ligand>
</feature>
<feature type="binding site" evidence="4">
    <location>
        <position position="92"/>
    </location>
    <ligand>
        <name>substrate</name>
    </ligand>
</feature>
<feature type="binding site" evidence="4">
    <location>
        <position position="193"/>
    </location>
    <ligand>
        <name>substrate</name>
    </ligand>
</feature>
<feature type="binding site" evidence="4">
    <location>
        <position position="193"/>
    </location>
    <ligand>
        <name>Zn(2+)</name>
        <dbReference type="ChEBI" id="CHEBI:29105"/>
        <label>2</label>
        <note>catalytic</note>
    </ligand>
</feature>
<feature type="binding site" evidence="4">
    <location>
        <position position="197"/>
    </location>
    <ligand>
        <name>Zn(2+)</name>
        <dbReference type="ChEBI" id="CHEBI:29105"/>
        <label>2</label>
        <note>catalytic</note>
    </ligand>
</feature>
<feature type="binding site" evidence="4">
    <location>
        <position position="240"/>
    </location>
    <ligand>
        <name>Zn(2+)</name>
        <dbReference type="ChEBI" id="CHEBI:29105"/>
        <label>1</label>
        <note>catalytic</note>
    </ligand>
</feature>
<feature type="binding site" evidence="4">
    <location>
        <position position="241"/>
    </location>
    <ligand>
        <name>substrate</name>
    </ligand>
</feature>
<feature type="binding site" evidence="4">
    <location>
        <position position="241"/>
    </location>
    <ligand>
        <name>Zn(2+)</name>
        <dbReference type="ChEBI" id="CHEBI:29105"/>
        <label>1</label>
        <note>catalytic</note>
    </ligand>
</feature>
<feature type="binding site" evidence="4">
    <location>
        <position position="354"/>
    </location>
    <ligand>
        <name>substrate</name>
    </ligand>
</feature>
<feature type="binding site" evidence="4">
    <location>
        <position position="354"/>
    </location>
    <ligand>
        <name>Zn(2+)</name>
        <dbReference type="ChEBI" id="CHEBI:29105"/>
        <label>2</label>
        <note>catalytic</note>
    </ligand>
</feature>
<feature type="modified residue" description="Phosphoserine" evidence="2">
    <location>
        <position position="71"/>
    </location>
</feature>
<feature type="lipid moiety-binding region" description="GPI-anchor amidated alanine" evidence="5">
    <location>
        <position position="418"/>
    </location>
</feature>
<feature type="glycosylation site" description="N-linked (GlcNAc...) asparagine" evidence="4">
    <location>
        <position position="100"/>
    </location>
</feature>
<feature type="glycosylation site" description="N-linked (GlcNAc...) asparagine" evidence="4">
    <location>
        <position position="118"/>
    </location>
</feature>
<feature type="glycosylation site" description="N-linked (GlcNAc...) asparagine" evidence="4">
    <location>
        <position position="341"/>
    </location>
</feature>
<feature type="glycosylation site" description="N-linked (GlcNAc...) asparagine" evidence="4">
    <location>
        <position position="404"/>
    </location>
</feature>
<feature type="disulfide bond" evidence="4">
    <location>
        <begin position="142"/>
        <end position="154"/>
    </location>
</feature>
<feature type="disulfide bond" description="Interchain" evidence="1">
    <location>
        <position position="412"/>
    </location>
</feature>
<feature type="splice variant" id="VSP_044950" description="In isoform 2." evidence="6">
    <original>DFKSNFRAAPIRSVDVYNVMCNVVGITPLPNNGSWSRVMCMLKGRAGTTPPVQPSHCALALILLFLLA</original>
    <variation>AWIISALSPKHYPCGAGGHELDGMGKKSQFSFLLKCTEFDFIFPIDGLSLSSRLECSGVMAYL</variation>
    <location>
        <begin position="373"/>
        <end position="440"/>
    </location>
</feature>
<feature type="sequence conflict" description="In Ref. 1; CAH91015." evidence="7" ref="1">
    <original>N</original>
    <variation>S</variation>
    <location>
        <position position="332"/>
    </location>
</feature>
<feature type="sequence conflict" description="In Ref. 1; CAH91015." evidence="7" ref="1">
    <original>GN</original>
    <variation>RE</variation>
    <location>
        <begin position="346"/>
        <end position="347"/>
    </location>
</feature>
<gene>
    <name evidence="3" type="primary">ENPP6</name>
</gene>
<proteinExistence type="evidence at transcript level"/>